<dbReference type="EC" id="7.1.1.-" evidence="1"/>
<dbReference type="EMBL" id="CP001657">
    <property type="protein sequence ID" value="ACT13801.1"/>
    <property type="molecule type" value="Genomic_DNA"/>
</dbReference>
<dbReference type="RefSeq" id="WP_005969846.1">
    <property type="nucleotide sequence ID" value="NC_012917.1"/>
</dbReference>
<dbReference type="SMR" id="C6DA45"/>
<dbReference type="STRING" id="561230.PC1_2771"/>
<dbReference type="KEGG" id="pct:PC1_2771"/>
<dbReference type="eggNOG" id="COG0377">
    <property type="taxonomic scope" value="Bacteria"/>
</dbReference>
<dbReference type="HOGENOM" id="CLU_055737_7_3_6"/>
<dbReference type="OrthoDB" id="9786737at2"/>
<dbReference type="Proteomes" id="UP000002736">
    <property type="component" value="Chromosome"/>
</dbReference>
<dbReference type="GO" id="GO:0005886">
    <property type="term" value="C:plasma membrane"/>
    <property type="evidence" value="ECO:0007669"/>
    <property type="project" value="UniProtKB-SubCell"/>
</dbReference>
<dbReference type="GO" id="GO:0045271">
    <property type="term" value="C:respiratory chain complex I"/>
    <property type="evidence" value="ECO:0007669"/>
    <property type="project" value="TreeGrafter"/>
</dbReference>
<dbReference type="GO" id="GO:0051539">
    <property type="term" value="F:4 iron, 4 sulfur cluster binding"/>
    <property type="evidence" value="ECO:0007669"/>
    <property type="project" value="UniProtKB-KW"/>
</dbReference>
<dbReference type="GO" id="GO:0005506">
    <property type="term" value="F:iron ion binding"/>
    <property type="evidence" value="ECO:0007669"/>
    <property type="project" value="UniProtKB-UniRule"/>
</dbReference>
<dbReference type="GO" id="GO:0008137">
    <property type="term" value="F:NADH dehydrogenase (ubiquinone) activity"/>
    <property type="evidence" value="ECO:0007669"/>
    <property type="project" value="InterPro"/>
</dbReference>
<dbReference type="GO" id="GO:0050136">
    <property type="term" value="F:NADH:ubiquinone reductase (non-electrogenic) activity"/>
    <property type="evidence" value="ECO:0007669"/>
    <property type="project" value="UniProtKB-UniRule"/>
</dbReference>
<dbReference type="GO" id="GO:0048038">
    <property type="term" value="F:quinone binding"/>
    <property type="evidence" value="ECO:0007669"/>
    <property type="project" value="UniProtKB-KW"/>
</dbReference>
<dbReference type="GO" id="GO:0009060">
    <property type="term" value="P:aerobic respiration"/>
    <property type="evidence" value="ECO:0007669"/>
    <property type="project" value="TreeGrafter"/>
</dbReference>
<dbReference type="GO" id="GO:0015990">
    <property type="term" value="P:electron transport coupled proton transport"/>
    <property type="evidence" value="ECO:0007669"/>
    <property type="project" value="TreeGrafter"/>
</dbReference>
<dbReference type="FunFam" id="3.40.50.12280:FF:000002">
    <property type="entry name" value="NADH-quinone oxidoreductase subunit B"/>
    <property type="match status" value="1"/>
</dbReference>
<dbReference type="Gene3D" id="3.40.50.12280">
    <property type="match status" value="1"/>
</dbReference>
<dbReference type="HAMAP" id="MF_01356">
    <property type="entry name" value="NDH1_NuoB"/>
    <property type="match status" value="1"/>
</dbReference>
<dbReference type="InterPro" id="IPR006137">
    <property type="entry name" value="NADH_UbQ_OxRdtase-like_20kDa"/>
</dbReference>
<dbReference type="InterPro" id="IPR006138">
    <property type="entry name" value="NADH_UQ_OxRdtase_20Kd_su"/>
</dbReference>
<dbReference type="NCBIfam" id="TIGR01957">
    <property type="entry name" value="nuoB_fam"/>
    <property type="match status" value="1"/>
</dbReference>
<dbReference type="NCBIfam" id="NF005012">
    <property type="entry name" value="PRK06411.1"/>
    <property type="match status" value="1"/>
</dbReference>
<dbReference type="PANTHER" id="PTHR11995">
    <property type="entry name" value="NADH DEHYDROGENASE"/>
    <property type="match status" value="1"/>
</dbReference>
<dbReference type="PANTHER" id="PTHR11995:SF14">
    <property type="entry name" value="NADH DEHYDROGENASE [UBIQUINONE] IRON-SULFUR PROTEIN 7, MITOCHONDRIAL"/>
    <property type="match status" value="1"/>
</dbReference>
<dbReference type="Pfam" id="PF01058">
    <property type="entry name" value="Oxidored_q6"/>
    <property type="match status" value="1"/>
</dbReference>
<dbReference type="SUPFAM" id="SSF56770">
    <property type="entry name" value="HydA/Nqo6-like"/>
    <property type="match status" value="1"/>
</dbReference>
<dbReference type="PROSITE" id="PS01150">
    <property type="entry name" value="COMPLEX1_20K"/>
    <property type="match status" value="1"/>
</dbReference>
<feature type="chain" id="PRO_1000214862" description="NADH-quinone oxidoreductase subunit B">
    <location>
        <begin position="1"/>
        <end position="224"/>
    </location>
</feature>
<feature type="binding site" evidence="1">
    <location>
        <position position="67"/>
    </location>
    <ligand>
        <name>[4Fe-4S] cluster</name>
        <dbReference type="ChEBI" id="CHEBI:49883"/>
    </ligand>
</feature>
<feature type="binding site" evidence="1">
    <location>
        <position position="68"/>
    </location>
    <ligand>
        <name>[4Fe-4S] cluster</name>
        <dbReference type="ChEBI" id="CHEBI:49883"/>
    </ligand>
</feature>
<feature type="binding site" evidence="1">
    <location>
        <position position="133"/>
    </location>
    <ligand>
        <name>[4Fe-4S] cluster</name>
        <dbReference type="ChEBI" id="CHEBI:49883"/>
    </ligand>
</feature>
<feature type="binding site" evidence="1">
    <location>
        <position position="162"/>
    </location>
    <ligand>
        <name>[4Fe-4S] cluster</name>
        <dbReference type="ChEBI" id="CHEBI:49883"/>
    </ligand>
</feature>
<protein>
    <recommendedName>
        <fullName evidence="1">NADH-quinone oxidoreductase subunit B</fullName>
        <ecNumber evidence="1">7.1.1.-</ecNumber>
    </recommendedName>
    <alternativeName>
        <fullName evidence="1">NADH dehydrogenase I subunit B</fullName>
    </alternativeName>
    <alternativeName>
        <fullName evidence="1">NDH-1 subunit B</fullName>
    </alternativeName>
</protein>
<reference key="1">
    <citation type="submission" date="2009-07" db="EMBL/GenBank/DDBJ databases">
        <title>Complete sequence of Pectobacterium carotovorum subsp. carotovorum PC1.</title>
        <authorList>
            <consortium name="US DOE Joint Genome Institute"/>
            <person name="Lucas S."/>
            <person name="Copeland A."/>
            <person name="Lapidus A."/>
            <person name="Glavina del Rio T."/>
            <person name="Tice H."/>
            <person name="Bruce D."/>
            <person name="Goodwin L."/>
            <person name="Pitluck S."/>
            <person name="Munk A.C."/>
            <person name="Brettin T."/>
            <person name="Detter J.C."/>
            <person name="Han C."/>
            <person name="Tapia R."/>
            <person name="Larimer F."/>
            <person name="Land M."/>
            <person name="Hauser L."/>
            <person name="Kyrpides N."/>
            <person name="Mikhailova N."/>
            <person name="Balakrishnan V."/>
            <person name="Glasner J."/>
            <person name="Perna N.T."/>
        </authorList>
    </citation>
    <scope>NUCLEOTIDE SEQUENCE [LARGE SCALE GENOMIC DNA]</scope>
    <source>
        <strain>PC1</strain>
    </source>
</reference>
<organism>
    <name type="scientific">Pectobacterium carotovorum subsp. carotovorum (strain PC1)</name>
    <dbReference type="NCBI Taxonomy" id="561230"/>
    <lineage>
        <taxon>Bacteria</taxon>
        <taxon>Pseudomonadati</taxon>
        <taxon>Pseudomonadota</taxon>
        <taxon>Gammaproteobacteria</taxon>
        <taxon>Enterobacterales</taxon>
        <taxon>Pectobacteriaceae</taxon>
        <taxon>Pectobacterium</taxon>
    </lineage>
</organism>
<name>NUOB_PECCP</name>
<comment type="function">
    <text evidence="1">NDH-1 shuttles electrons from NADH, via FMN and iron-sulfur (Fe-S) centers, to quinones in the respiratory chain. The immediate electron acceptor for the enzyme in this species is believed to be ubiquinone. Couples the redox reaction to proton translocation (for every two electrons transferred, four hydrogen ions are translocated across the cytoplasmic membrane), and thus conserves the redox energy in a proton gradient.</text>
</comment>
<comment type="catalytic activity">
    <reaction evidence="1">
        <text>a quinone + NADH + 5 H(+)(in) = a quinol + NAD(+) + 4 H(+)(out)</text>
        <dbReference type="Rhea" id="RHEA:57888"/>
        <dbReference type="ChEBI" id="CHEBI:15378"/>
        <dbReference type="ChEBI" id="CHEBI:24646"/>
        <dbReference type="ChEBI" id="CHEBI:57540"/>
        <dbReference type="ChEBI" id="CHEBI:57945"/>
        <dbReference type="ChEBI" id="CHEBI:132124"/>
    </reaction>
</comment>
<comment type="cofactor">
    <cofactor evidence="1">
        <name>[4Fe-4S] cluster</name>
        <dbReference type="ChEBI" id="CHEBI:49883"/>
    </cofactor>
    <text evidence="1">Binds 1 [4Fe-4S] cluster.</text>
</comment>
<comment type="subunit">
    <text evidence="1">NDH-1 is composed of 13 different subunits. Subunits NuoB, CD, E, F, and G constitute the peripheral sector of the complex.</text>
</comment>
<comment type="subcellular location">
    <subcellularLocation>
        <location evidence="1">Cell inner membrane</location>
        <topology evidence="1">Peripheral membrane protein</topology>
        <orientation evidence="1">Cytoplasmic side</orientation>
    </subcellularLocation>
</comment>
<comment type="similarity">
    <text evidence="1">Belongs to the complex I 20 kDa subunit family.</text>
</comment>
<accession>C6DA45</accession>
<gene>
    <name evidence="1" type="primary">nuoB</name>
    <name type="ordered locus">PC1_2771</name>
</gene>
<sequence>MDYTLTRIEPDGENDRYPLQRQEIVSDPLEQHVHRSVYMGKLEHALHDTVNWGRQNSLWPYNFGLSCCYVEMVTSFTAVHDVARFGAEVLRASPRQADFMVVAGTCFTKMAPVIQRLYEQMLEPKWVISMGACANSGGMYDIYSVVQGVDKFLPVDVYIPGCPPRPEAYMQALLLLKESIGKERRPLSWVVGEQGVYRANMQSERERKRGERIAVTNLRSPDEI</sequence>
<evidence type="ECO:0000255" key="1">
    <source>
        <dbReference type="HAMAP-Rule" id="MF_01356"/>
    </source>
</evidence>
<proteinExistence type="inferred from homology"/>
<keyword id="KW-0004">4Fe-4S</keyword>
<keyword id="KW-0997">Cell inner membrane</keyword>
<keyword id="KW-1003">Cell membrane</keyword>
<keyword id="KW-0408">Iron</keyword>
<keyword id="KW-0411">Iron-sulfur</keyword>
<keyword id="KW-0472">Membrane</keyword>
<keyword id="KW-0479">Metal-binding</keyword>
<keyword id="KW-0520">NAD</keyword>
<keyword id="KW-0874">Quinone</keyword>
<keyword id="KW-1278">Translocase</keyword>
<keyword id="KW-0813">Transport</keyword>
<keyword id="KW-0830">Ubiquinone</keyword>